<reference key="1">
    <citation type="journal article" date="2008" name="J. Bacteriol.">
        <title>The complete genome sequence of Escherichia coli DH10B: insights into the biology of a laboratory workhorse.</title>
        <authorList>
            <person name="Durfee T."/>
            <person name="Nelson R."/>
            <person name="Baldwin S."/>
            <person name="Plunkett G. III"/>
            <person name="Burland V."/>
            <person name="Mau B."/>
            <person name="Petrosino J.F."/>
            <person name="Qin X."/>
            <person name="Muzny D.M."/>
            <person name="Ayele M."/>
            <person name="Gibbs R.A."/>
            <person name="Csorgo B."/>
            <person name="Posfai G."/>
            <person name="Weinstock G.M."/>
            <person name="Blattner F.R."/>
        </authorList>
    </citation>
    <scope>NUCLEOTIDE SEQUENCE [LARGE SCALE GENOMIC DNA]</scope>
    <source>
        <strain>K12 / DH10B</strain>
    </source>
</reference>
<name>TUSC_ECODH</name>
<evidence type="ECO:0000255" key="1">
    <source>
        <dbReference type="HAMAP-Rule" id="MF_00389"/>
    </source>
</evidence>
<feature type="chain" id="PRO_1000122838" description="Protein TusC">
    <location>
        <begin position="1"/>
        <end position="119"/>
    </location>
</feature>
<accession>B1X6J3</accession>
<gene>
    <name evidence="1" type="primary">tusC</name>
    <name type="ordered locus">ECDH10B_3519</name>
</gene>
<dbReference type="EMBL" id="CP000948">
    <property type="protein sequence ID" value="ACB04403.1"/>
    <property type="molecule type" value="Genomic_DNA"/>
</dbReference>
<dbReference type="RefSeq" id="WP_000820714.1">
    <property type="nucleotide sequence ID" value="NC_010473.1"/>
</dbReference>
<dbReference type="SMR" id="B1X6J3"/>
<dbReference type="GeneID" id="93778654"/>
<dbReference type="KEGG" id="ecd:ECDH10B_3519"/>
<dbReference type="HOGENOM" id="CLU_155943_1_0_6"/>
<dbReference type="GO" id="GO:0005737">
    <property type="term" value="C:cytoplasm"/>
    <property type="evidence" value="ECO:0007669"/>
    <property type="project" value="UniProtKB-SubCell"/>
</dbReference>
<dbReference type="GO" id="GO:0008033">
    <property type="term" value="P:tRNA processing"/>
    <property type="evidence" value="ECO:0007669"/>
    <property type="project" value="UniProtKB-UniRule"/>
</dbReference>
<dbReference type="FunFam" id="3.40.1260.10:FF:000004">
    <property type="entry name" value="Sulfurtransferase TusC"/>
    <property type="match status" value="1"/>
</dbReference>
<dbReference type="Gene3D" id="3.40.1260.10">
    <property type="entry name" value="DsrEFH-like"/>
    <property type="match status" value="1"/>
</dbReference>
<dbReference type="HAMAP" id="MF_00389">
    <property type="entry name" value="Thiourid_synth_C"/>
    <property type="match status" value="1"/>
</dbReference>
<dbReference type="InterPro" id="IPR027396">
    <property type="entry name" value="DsrEFH-like"/>
</dbReference>
<dbReference type="InterPro" id="IPR003787">
    <property type="entry name" value="Sulphur_relay_DsrE/F-like"/>
</dbReference>
<dbReference type="InterPro" id="IPR037450">
    <property type="entry name" value="Sulphur_relay_TusC"/>
</dbReference>
<dbReference type="InterPro" id="IPR017462">
    <property type="entry name" value="Sulphur_relay_TusC/DsrF"/>
</dbReference>
<dbReference type="NCBIfam" id="NF001238">
    <property type="entry name" value="PRK00211.1"/>
    <property type="match status" value="1"/>
</dbReference>
<dbReference type="NCBIfam" id="TIGR03010">
    <property type="entry name" value="sulf_tusC_dsrF"/>
    <property type="match status" value="1"/>
</dbReference>
<dbReference type="PANTHER" id="PTHR38780">
    <property type="entry name" value="PROTEIN TUSC"/>
    <property type="match status" value="1"/>
</dbReference>
<dbReference type="PANTHER" id="PTHR38780:SF1">
    <property type="entry name" value="PROTEIN TUSC"/>
    <property type="match status" value="1"/>
</dbReference>
<dbReference type="Pfam" id="PF02635">
    <property type="entry name" value="DsrE"/>
    <property type="match status" value="1"/>
</dbReference>
<dbReference type="SUPFAM" id="SSF75169">
    <property type="entry name" value="DsrEFH-like"/>
    <property type="match status" value="1"/>
</dbReference>
<protein>
    <recommendedName>
        <fullName evidence="1">Protein TusC</fullName>
    </recommendedName>
    <alternativeName>
        <fullName evidence="1">tRNA 2-thiouridine synthesizing protein C</fullName>
    </alternativeName>
</protein>
<organism>
    <name type="scientific">Escherichia coli (strain K12 / DH10B)</name>
    <dbReference type="NCBI Taxonomy" id="316385"/>
    <lineage>
        <taxon>Bacteria</taxon>
        <taxon>Pseudomonadati</taxon>
        <taxon>Pseudomonadota</taxon>
        <taxon>Gammaproteobacteria</taxon>
        <taxon>Enterobacterales</taxon>
        <taxon>Enterobacteriaceae</taxon>
        <taxon>Escherichia</taxon>
    </lineage>
</organism>
<sequence length="119" mass="13045">MKRIAFVFSTAPHGTAAGREGLDALLATSALTDDLAVFFIADGVFQLLPGQKPDAVLARDYIATFKLLGLYDIEQCWVCAASLRERGLDPQTPFVVEATPLEADALRRELANYDVILRF</sequence>
<comment type="function">
    <text evidence="1">Part of a sulfur-relay system required for 2-thiolation of 5-methylaminomethyl-2-thiouridine (mnm(5)s(2)U) at tRNA wobble positions.</text>
</comment>
<comment type="subunit">
    <text evidence="1">Heterohexamer, formed by a dimer of trimers. The hexameric TusBCD complex contains 2 copies each of TusB, TusC and TusD. The TusBCD complex interacts with TusE.</text>
</comment>
<comment type="subcellular location">
    <subcellularLocation>
        <location evidence="1">Cytoplasm</location>
    </subcellularLocation>
</comment>
<comment type="similarity">
    <text evidence="1">Belongs to the DsrF/TusC family.</text>
</comment>
<proteinExistence type="inferred from homology"/>
<keyword id="KW-0963">Cytoplasm</keyword>
<keyword id="KW-0819">tRNA processing</keyword>